<accession>Q9ZW26</accession>
<keyword id="KW-0963">Cytoplasm</keyword>
<keyword id="KW-0216">Detoxification</keyword>
<keyword id="KW-0597">Phosphoprotein</keyword>
<keyword id="KW-1185">Reference proteome</keyword>
<keyword id="KW-0808">Transferase</keyword>
<organism>
    <name type="scientific">Arabidopsis thaliana</name>
    <name type="common">Mouse-ear cress</name>
    <dbReference type="NCBI Taxonomy" id="3702"/>
    <lineage>
        <taxon>Eukaryota</taxon>
        <taxon>Viridiplantae</taxon>
        <taxon>Streptophyta</taxon>
        <taxon>Embryophyta</taxon>
        <taxon>Tracheophyta</taxon>
        <taxon>Spermatophyta</taxon>
        <taxon>Magnoliopsida</taxon>
        <taxon>eudicotyledons</taxon>
        <taxon>Gunneridae</taxon>
        <taxon>Pentapetalae</taxon>
        <taxon>rosids</taxon>
        <taxon>malvids</taxon>
        <taxon>Brassicales</taxon>
        <taxon>Brassicaceae</taxon>
        <taxon>Camelineae</taxon>
        <taxon>Arabidopsis</taxon>
    </lineage>
</organism>
<comment type="function">
    <text evidence="1">May be involved in the conjugation of reduced glutathione to a wide number of exogenous and endogenous hydrophobic electrophiles and have a detoxification role against certain herbicides.</text>
</comment>
<comment type="catalytic activity">
    <reaction>
        <text>RX + glutathione = an S-substituted glutathione + a halide anion + H(+)</text>
        <dbReference type="Rhea" id="RHEA:16437"/>
        <dbReference type="ChEBI" id="CHEBI:15378"/>
        <dbReference type="ChEBI" id="CHEBI:16042"/>
        <dbReference type="ChEBI" id="CHEBI:17792"/>
        <dbReference type="ChEBI" id="CHEBI:57925"/>
        <dbReference type="ChEBI" id="CHEBI:90779"/>
        <dbReference type="EC" id="2.5.1.18"/>
    </reaction>
</comment>
<comment type="subcellular location">
    <subcellularLocation>
        <location evidence="3">Cytoplasm</location>
        <location evidence="3">Cytosol</location>
    </subcellularLocation>
</comment>
<comment type="similarity">
    <text evidence="3">Belongs to the GST superfamily. Tau family.</text>
</comment>
<name>GSTU6_ARATH</name>
<proteinExistence type="evidence at transcript level"/>
<sequence>MGKNEEVKLLGIWASPFSRRIEMALKLKGVPYEYLEEDLENKSSLLLALSPIHKKIPVLVHNGKTIIESHVILEYIDETWKHNPILPQDPFQRSKARVLAKLVDEKIVNVGFASLAKTEKGREVLIEQTRELIMCLEKELAGKDYFGGKTVGFLDFVAGSMIPFCLERAWEGMGVEMITEKKFPEYNKWVKKLKEVEIVVDCIPLREKHIEHMNNMAEKIRSA</sequence>
<feature type="chain" id="PRO_0000413552" description="Glutathione S-transferase U6">
    <location>
        <begin position="1"/>
        <end position="223"/>
    </location>
</feature>
<feature type="domain" description="GST N-terminal">
    <location>
        <begin position="5"/>
        <end position="84"/>
    </location>
</feature>
<feature type="domain" description="GST C-terminal">
    <location>
        <begin position="89"/>
        <end position="216"/>
    </location>
</feature>
<feature type="binding site" evidence="1">
    <location>
        <begin position="15"/>
        <end position="16"/>
    </location>
    <ligand>
        <name>glutathione</name>
        <dbReference type="ChEBI" id="CHEBI:57925"/>
    </ligand>
</feature>
<feature type="binding site" evidence="1">
    <location>
        <begin position="41"/>
        <end position="42"/>
    </location>
    <ligand>
        <name>glutathione</name>
        <dbReference type="ChEBI" id="CHEBI:57925"/>
    </ligand>
</feature>
<feature type="binding site" evidence="1">
    <location>
        <begin position="55"/>
        <end position="56"/>
    </location>
    <ligand>
        <name>glutathione</name>
        <dbReference type="ChEBI" id="CHEBI:57925"/>
    </ligand>
</feature>
<feature type="binding site" evidence="1">
    <location>
        <begin position="68"/>
        <end position="69"/>
    </location>
    <ligand>
        <name>glutathione</name>
        <dbReference type="ChEBI" id="CHEBI:57925"/>
    </ligand>
</feature>
<feature type="modified residue" description="Phosphothreonine" evidence="2">
    <location>
        <position position="150"/>
    </location>
</feature>
<protein>
    <recommendedName>
        <fullName>Glutathione S-transferase U6</fullName>
        <shortName>AtGSTU6</shortName>
        <ecNumber>2.5.1.18</ecNumber>
    </recommendedName>
    <alternativeName>
        <fullName>GST class-tau member 6</fullName>
    </alternativeName>
    <alternativeName>
        <fullName>Glutathione S-transferase 24</fullName>
    </alternativeName>
</protein>
<gene>
    <name type="primary">GSTU6</name>
    <name type="synonym">GST24</name>
    <name type="ordered locus">At2g29440</name>
    <name type="ORF">F16P2.18</name>
</gene>
<evidence type="ECO:0000250" key="1"/>
<evidence type="ECO:0000250" key="2">
    <source>
        <dbReference type="UniProtKB" id="Q9ZW27"/>
    </source>
</evidence>
<evidence type="ECO:0000305" key="3"/>
<reference key="1">
    <citation type="journal article" date="2002" name="Plant Mol. Biol.">
        <title>Probing the diversity of the Arabidopsis glutathione S-transferase gene family.</title>
        <authorList>
            <person name="Wagner U."/>
            <person name="Edwards R."/>
            <person name="Dixon D.P."/>
            <person name="Mauch F."/>
        </authorList>
    </citation>
    <scope>NUCLEOTIDE SEQUENCE [MRNA]</scope>
    <scope>GENE FAMILY</scope>
    <scope>NOMENCLATURE</scope>
    <source>
        <strain>cv. Columbia</strain>
    </source>
</reference>
<reference key="2">
    <citation type="journal article" date="1999" name="Nature">
        <title>Sequence and analysis of chromosome 2 of the plant Arabidopsis thaliana.</title>
        <authorList>
            <person name="Lin X."/>
            <person name="Kaul S."/>
            <person name="Rounsley S.D."/>
            <person name="Shea T.P."/>
            <person name="Benito M.-I."/>
            <person name="Town C.D."/>
            <person name="Fujii C.Y."/>
            <person name="Mason T.M."/>
            <person name="Bowman C.L."/>
            <person name="Barnstead M.E."/>
            <person name="Feldblyum T.V."/>
            <person name="Buell C.R."/>
            <person name="Ketchum K.A."/>
            <person name="Lee J.J."/>
            <person name="Ronning C.M."/>
            <person name="Koo H.L."/>
            <person name="Moffat K.S."/>
            <person name="Cronin L.A."/>
            <person name="Shen M."/>
            <person name="Pai G."/>
            <person name="Van Aken S."/>
            <person name="Umayam L."/>
            <person name="Tallon L.J."/>
            <person name="Gill J.E."/>
            <person name="Adams M.D."/>
            <person name="Carrera A.J."/>
            <person name="Creasy T.H."/>
            <person name="Goodman H.M."/>
            <person name="Somerville C.R."/>
            <person name="Copenhaver G.P."/>
            <person name="Preuss D."/>
            <person name="Nierman W.C."/>
            <person name="White O."/>
            <person name="Eisen J.A."/>
            <person name="Salzberg S.L."/>
            <person name="Fraser C.M."/>
            <person name="Venter J.C."/>
        </authorList>
    </citation>
    <scope>NUCLEOTIDE SEQUENCE [LARGE SCALE GENOMIC DNA]</scope>
    <source>
        <strain>cv. Columbia</strain>
    </source>
</reference>
<reference key="3">
    <citation type="journal article" date="2017" name="Plant J.">
        <title>Araport11: a complete reannotation of the Arabidopsis thaliana reference genome.</title>
        <authorList>
            <person name="Cheng C.Y."/>
            <person name="Krishnakumar V."/>
            <person name="Chan A.P."/>
            <person name="Thibaud-Nissen F."/>
            <person name="Schobel S."/>
            <person name="Town C.D."/>
        </authorList>
    </citation>
    <scope>GENOME REANNOTATION</scope>
    <source>
        <strain>cv. Columbia</strain>
    </source>
</reference>
<reference key="4">
    <citation type="submission" date="2006-03" db="EMBL/GenBank/DDBJ databases">
        <title>Arabidopsis ORF clones.</title>
        <authorList>
            <person name="Kim C.J."/>
            <person name="Chen H."/>
            <person name="Shinn P."/>
            <person name="Ecker J.R."/>
        </authorList>
    </citation>
    <scope>NUCLEOTIDE SEQUENCE [LARGE SCALE MRNA]</scope>
    <source>
        <strain>cv. Columbia</strain>
    </source>
</reference>
<reference key="5">
    <citation type="submission" date="2006-07" db="EMBL/GenBank/DDBJ databases">
        <title>Large-scale analysis of RIKEN Arabidopsis full-length (RAFL) cDNAs.</title>
        <authorList>
            <person name="Totoki Y."/>
            <person name="Seki M."/>
            <person name="Ishida J."/>
            <person name="Nakajima M."/>
            <person name="Enju A."/>
            <person name="Kamiya A."/>
            <person name="Narusaka M."/>
            <person name="Shin-i T."/>
            <person name="Nakagawa M."/>
            <person name="Sakamoto N."/>
            <person name="Oishi K."/>
            <person name="Kohara Y."/>
            <person name="Kobayashi M."/>
            <person name="Toyoda A."/>
            <person name="Sakaki Y."/>
            <person name="Sakurai T."/>
            <person name="Iida K."/>
            <person name="Akiyama K."/>
            <person name="Satou M."/>
            <person name="Toyoda T."/>
            <person name="Konagaya A."/>
            <person name="Carninci P."/>
            <person name="Kawai J."/>
            <person name="Hayashizaki Y."/>
            <person name="Shinozaki K."/>
        </authorList>
    </citation>
    <scope>NUCLEOTIDE SEQUENCE [LARGE SCALE MRNA]</scope>
    <source>
        <strain>cv. Columbia</strain>
    </source>
</reference>
<dbReference type="EC" id="2.5.1.18"/>
<dbReference type="EMBL" id="AF288187">
    <property type="protein sequence ID" value="AAG30136.1"/>
    <property type="molecule type" value="mRNA"/>
</dbReference>
<dbReference type="EMBL" id="AC004561">
    <property type="protein sequence ID" value="AAC95194.1"/>
    <property type="molecule type" value="Genomic_DNA"/>
</dbReference>
<dbReference type="EMBL" id="CP002685">
    <property type="protein sequence ID" value="AEC08254.1"/>
    <property type="molecule type" value="Genomic_DNA"/>
</dbReference>
<dbReference type="EMBL" id="BT024843">
    <property type="protein sequence ID" value="ABD60726.1"/>
    <property type="molecule type" value="mRNA"/>
</dbReference>
<dbReference type="EMBL" id="AK229012">
    <property type="protein sequence ID" value="BAF00899.1"/>
    <property type="molecule type" value="mRNA"/>
</dbReference>
<dbReference type="PIR" id="D84696">
    <property type="entry name" value="D84696"/>
</dbReference>
<dbReference type="RefSeq" id="NP_180505.1">
    <property type="nucleotide sequence ID" value="NM_128498.5"/>
</dbReference>
<dbReference type="SMR" id="Q9ZW26"/>
<dbReference type="FunCoup" id="Q9ZW26">
    <property type="interactions" value="140"/>
</dbReference>
<dbReference type="STRING" id="3702.Q9ZW26"/>
<dbReference type="iPTMnet" id="Q9ZW26"/>
<dbReference type="PaxDb" id="3702-AT2G29440.1"/>
<dbReference type="ProteomicsDB" id="247191"/>
<dbReference type="EnsemblPlants" id="AT2G29440.1">
    <property type="protein sequence ID" value="AT2G29440.1"/>
    <property type="gene ID" value="AT2G29440"/>
</dbReference>
<dbReference type="GeneID" id="817493"/>
<dbReference type="Gramene" id="AT2G29440.1">
    <property type="protein sequence ID" value="AT2G29440.1"/>
    <property type="gene ID" value="AT2G29440"/>
</dbReference>
<dbReference type="KEGG" id="ath:AT2G29440"/>
<dbReference type="Araport" id="AT2G29440"/>
<dbReference type="TAIR" id="AT2G29440">
    <property type="gene designation" value="GSTU6"/>
</dbReference>
<dbReference type="eggNOG" id="KOG0406">
    <property type="taxonomic scope" value="Eukaryota"/>
</dbReference>
<dbReference type="HOGENOM" id="CLU_011226_18_1_1"/>
<dbReference type="InParanoid" id="Q9ZW26"/>
<dbReference type="OMA" id="PFCLERA"/>
<dbReference type="PhylomeDB" id="Q9ZW26"/>
<dbReference type="BioCyc" id="ARA:AT2G29440-MONOMER"/>
<dbReference type="PRO" id="PR:Q9ZW26"/>
<dbReference type="Proteomes" id="UP000006548">
    <property type="component" value="Chromosome 2"/>
</dbReference>
<dbReference type="ExpressionAtlas" id="Q9ZW26">
    <property type="expression patterns" value="baseline and differential"/>
</dbReference>
<dbReference type="GO" id="GO:0005737">
    <property type="term" value="C:cytoplasm"/>
    <property type="evidence" value="ECO:0000303"/>
    <property type="project" value="TAIR"/>
</dbReference>
<dbReference type="GO" id="GO:0005829">
    <property type="term" value="C:cytosol"/>
    <property type="evidence" value="ECO:0007669"/>
    <property type="project" value="UniProtKB-SubCell"/>
</dbReference>
<dbReference type="GO" id="GO:0005777">
    <property type="term" value="C:peroxisome"/>
    <property type="evidence" value="ECO:0007005"/>
    <property type="project" value="TAIR"/>
</dbReference>
<dbReference type="GO" id="GO:0004364">
    <property type="term" value="F:glutathione transferase activity"/>
    <property type="evidence" value="ECO:0007669"/>
    <property type="project" value="UniProtKB-EC"/>
</dbReference>
<dbReference type="GO" id="GO:0006749">
    <property type="term" value="P:glutathione metabolic process"/>
    <property type="evidence" value="ECO:0007669"/>
    <property type="project" value="InterPro"/>
</dbReference>
<dbReference type="GO" id="GO:0009407">
    <property type="term" value="P:toxin catabolic process"/>
    <property type="evidence" value="ECO:0000304"/>
    <property type="project" value="TAIR"/>
</dbReference>
<dbReference type="CDD" id="cd03185">
    <property type="entry name" value="GST_C_Tau"/>
    <property type="match status" value="1"/>
</dbReference>
<dbReference type="CDD" id="cd03058">
    <property type="entry name" value="GST_N_Tau"/>
    <property type="match status" value="1"/>
</dbReference>
<dbReference type="FunFam" id="1.20.1050.10:FF:000012">
    <property type="entry name" value="Tau class glutathione S-transferase"/>
    <property type="match status" value="1"/>
</dbReference>
<dbReference type="FunFam" id="3.40.30.10:FF:000014">
    <property type="entry name" value="Tau class glutathione S-transferase"/>
    <property type="match status" value="1"/>
</dbReference>
<dbReference type="Gene3D" id="1.20.1050.10">
    <property type="match status" value="1"/>
</dbReference>
<dbReference type="Gene3D" id="3.40.30.10">
    <property type="entry name" value="Glutaredoxin"/>
    <property type="match status" value="1"/>
</dbReference>
<dbReference type="InterPro" id="IPR010987">
    <property type="entry name" value="Glutathione-S-Trfase_C-like"/>
</dbReference>
<dbReference type="InterPro" id="IPR036282">
    <property type="entry name" value="Glutathione-S-Trfase_C_sf"/>
</dbReference>
<dbReference type="InterPro" id="IPR040079">
    <property type="entry name" value="Glutathione_S-Trfase"/>
</dbReference>
<dbReference type="InterPro" id="IPR004045">
    <property type="entry name" value="Glutathione_S-Trfase_N"/>
</dbReference>
<dbReference type="InterPro" id="IPR045074">
    <property type="entry name" value="GST_C_Tau"/>
</dbReference>
<dbReference type="InterPro" id="IPR045073">
    <property type="entry name" value="Omega/Tau-like"/>
</dbReference>
<dbReference type="InterPro" id="IPR036249">
    <property type="entry name" value="Thioredoxin-like_sf"/>
</dbReference>
<dbReference type="PANTHER" id="PTHR11260:SF533">
    <property type="entry name" value="GLUTATHIONE S-TRANSFERASE U5-RELATED"/>
    <property type="match status" value="1"/>
</dbReference>
<dbReference type="PANTHER" id="PTHR11260">
    <property type="entry name" value="GLUTATHIONE S-TRANSFERASE, GST, SUPERFAMILY, GST DOMAIN CONTAINING"/>
    <property type="match status" value="1"/>
</dbReference>
<dbReference type="Pfam" id="PF02798">
    <property type="entry name" value="GST_N"/>
    <property type="match status" value="1"/>
</dbReference>
<dbReference type="SFLD" id="SFLDS00019">
    <property type="entry name" value="Glutathione_Transferase_(cytos"/>
    <property type="match status" value="1"/>
</dbReference>
<dbReference type="SFLD" id="SFLDG01152">
    <property type="entry name" value="Main.3:_Omega-_and_Tau-like"/>
    <property type="match status" value="1"/>
</dbReference>
<dbReference type="SUPFAM" id="SSF47616">
    <property type="entry name" value="GST C-terminal domain-like"/>
    <property type="match status" value="1"/>
</dbReference>
<dbReference type="SUPFAM" id="SSF52833">
    <property type="entry name" value="Thioredoxin-like"/>
    <property type="match status" value="1"/>
</dbReference>
<dbReference type="PROSITE" id="PS50405">
    <property type="entry name" value="GST_CTER"/>
    <property type="match status" value="1"/>
</dbReference>
<dbReference type="PROSITE" id="PS50404">
    <property type="entry name" value="GST_NTER"/>
    <property type="match status" value="1"/>
</dbReference>